<accession>Q4WSI1</accession>
<proteinExistence type="evidence at transcript level"/>
<dbReference type="EMBL" id="AAHF01000004">
    <property type="protein sequence ID" value="EAL90601.1"/>
    <property type="molecule type" value="Genomic_DNA"/>
</dbReference>
<dbReference type="RefSeq" id="XP_752639.1">
    <property type="nucleotide sequence ID" value="XM_747546.1"/>
</dbReference>
<dbReference type="SMR" id="Q4WSI1"/>
<dbReference type="STRING" id="330879.Q4WSI1"/>
<dbReference type="GlyCosmos" id="Q4WSI1">
    <property type="glycosylation" value="2 sites, No reported glycans"/>
</dbReference>
<dbReference type="EnsemblFungi" id="EAL90601">
    <property type="protein sequence ID" value="EAL90601"/>
    <property type="gene ID" value="AFUA_1G12690"/>
</dbReference>
<dbReference type="GeneID" id="3510389"/>
<dbReference type="KEGG" id="afm:AFUA_1G12690"/>
<dbReference type="VEuPathDB" id="FungiDB:Afu1g12690"/>
<dbReference type="eggNOG" id="KOG0055">
    <property type="taxonomic scope" value="Eukaryota"/>
</dbReference>
<dbReference type="HOGENOM" id="CLU_000604_17_8_1"/>
<dbReference type="InParanoid" id="Q4WSI1"/>
<dbReference type="OMA" id="SCGQMFA"/>
<dbReference type="OrthoDB" id="6500128at2759"/>
<dbReference type="Proteomes" id="UP000002530">
    <property type="component" value="Chromosome 1"/>
</dbReference>
<dbReference type="GO" id="GO:0016020">
    <property type="term" value="C:membrane"/>
    <property type="evidence" value="ECO:0000318"/>
    <property type="project" value="GO_Central"/>
</dbReference>
<dbReference type="GO" id="GO:0005886">
    <property type="term" value="C:plasma membrane"/>
    <property type="evidence" value="ECO:0007669"/>
    <property type="project" value="UniProtKB-SubCell"/>
</dbReference>
<dbReference type="GO" id="GO:0140359">
    <property type="term" value="F:ABC-type transporter activity"/>
    <property type="evidence" value="ECO:0007669"/>
    <property type="project" value="InterPro"/>
</dbReference>
<dbReference type="GO" id="GO:0005524">
    <property type="term" value="F:ATP binding"/>
    <property type="evidence" value="ECO:0007669"/>
    <property type="project" value="UniProtKB-KW"/>
</dbReference>
<dbReference type="GO" id="GO:0016887">
    <property type="term" value="F:ATP hydrolysis activity"/>
    <property type="evidence" value="ECO:0007669"/>
    <property type="project" value="InterPro"/>
</dbReference>
<dbReference type="GO" id="GO:0042626">
    <property type="term" value="F:ATPase-coupled transmembrane transporter activity"/>
    <property type="evidence" value="ECO:0000318"/>
    <property type="project" value="GO_Central"/>
</dbReference>
<dbReference type="GO" id="GO:0055085">
    <property type="term" value="P:transmembrane transport"/>
    <property type="evidence" value="ECO:0000318"/>
    <property type="project" value="GO_Central"/>
</dbReference>
<dbReference type="CDD" id="cd18577">
    <property type="entry name" value="ABC_6TM_Pgp_ABCB1_D1_like"/>
    <property type="match status" value="1"/>
</dbReference>
<dbReference type="CDD" id="cd18578">
    <property type="entry name" value="ABC_6TM_Pgp_ABCB1_D2_like"/>
    <property type="match status" value="1"/>
</dbReference>
<dbReference type="FunFam" id="3.40.50.300:FF:000967">
    <property type="entry name" value="ABC multidrug transporter mdr4"/>
    <property type="match status" value="1"/>
</dbReference>
<dbReference type="FunFam" id="1.20.1560.10:FF:000057">
    <property type="entry name" value="ABC multidrug transporter SitT"/>
    <property type="match status" value="2"/>
</dbReference>
<dbReference type="FunFam" id="3.40.50.300:FF:002064">
    <property type="entry name" value="Multidrug resistance protein 1, 2, 3"/>
    <property type="match status" value="1"/>
</dbReference>
<dbReference type="Gene3D" id="1.20.1560.10">
    <property type="entry name" value="ABC transporter type 1, transmembrane domain"/>
    <property type="match status" value="2"/>
</dbReference>
<dbReference type="Gene3D" id="3.40.50.300">
    <property type="entry name" value="P-loop containing nucleotide triphosphate hydrolases"/>
    <property type="match status" value="2"/>
</dbReference>
<dbReference type="InterPro" id="IPR003593">
    <property type="entry name" value="AAA+_ATPase"/>
</dbReference>
<dbReference type="InterPro" id="IPR011527">
    <property type="entry name" value="ABC1_TM_dom"/>
</dbReference>
<dbReference type="InterPro" id="IPR036640">
    <property type="entry name" value="ABC1_TM_sf"/>
</dbReference>
<dbReference type="InterPro" id="IPR003439">
    <property type="entry name" value="ABC_transporter-like_ATP-bd"/>
</dbReference>
<dbReference type="InterPro" id="IPR017871">
    <property type="entry name" value="ABC_transporter-like_CS"/>
</dbReference>
<dbReference type="InterPro" id="IPR027417">
    <property type="entry name" value="P-loop_NTPase"/>
</dbReference>
<dbReference type="InterPro" id="IPR039421">
    <property type="entry name" value="Type_1_exporter"/>
</dbReference>
<dbReference type="PANTHER" id="PTHR43394:SF11">
    <property type="entry name" value="ATP-BINDING CASSETTE TRANSPORTER"/>
    <property type="match status" value="1"/>
</dbReference>
<dbReference type="PANTHER" id="PTHR43394">
    <property type="entry name" value="ATP-DEPENDENT PERMEASE MDL1, MITOCHONDRIAL"/>
    <property type="match status" value="1"/>
</dbReference>
<dbReference type="Pfam" id="PF00664">
    <property type="entry name" value="ABC_membrane"/>
    <property type="match status" value="2"/>
</dbReference>
<dbReference type="Pfam" id="PF00005">
    <property type="entry name" value="ABC_tran"/>
    <property type="match status" value="2"/>
</dbReference>
<dbReference type="SMART" id="SM00382">
    <property type="entry name" value="AAA"/>
    <property type="match status" value="2"/>
</dbReference>
<dbReference type="SUPFAM" id="SSF90123">
    <property type="entry name" value="ABC transporter transmembrane region"/>
    <property type="match status" value="2"/>
</dbReference>
<dbReference type="SUPFAM" id="SSF52540">
    <property type="entry name" value="P-loop containing nucleoside triphosphate hydrolases"/>
    <property type="match status" value="2"/>
</dbReference>
<dbReference type="PROSITE" id="PS50929">
    <property type="entry name" value="ABC_TM1F"/>
    <property type="match status" value="2"/>
</dbReference>
<dbReference type="PROSITE" id="PS00211">
    <property type="entry name" value="ABC_TRANSPORTER_1"/>
    <property type="match status" value="2"/>
</dbReference>
<dbReference type="PROSITE" id="PS50893">
    <property type="entry name" value="ABC_TRANSPORTER_2"/>
    <property type="match status" value="2"/>
</dbReference>
<gene>
    <name evidence="12" type="primary">mdr4</name>
    <name type="ORF">AFUA_1G12690</name>
</gene>
<comment type="function">
    <text evidence="6 9">Pleiotropic ABC efflux transporter that confers resistance to azoles such as itraconazole and voriconazole.</text>
</comment>
<comment type="catalytic activity">
    <reaction evidence="14">
        <text>itraconazole(in) + ATP + H2O = itraconazole(out) + ADP + phosphate + H(+)</text>
        <dbReference type="Rhea" id="RHEA:33503"/>
        <dbReference type="ChEBI" id="CHEBI:6076"/>
        <dbReference type="ChEBI" id="CHEBI:15377"/>
        <dbReference type="ChEBI" id="CHEBI:15378"/>
        <dbReference type="ChEBI" id="CHEBI:30616"/>
        <dbReference type="ChEBI" id="CHEBI:43474"/>
        <dbReference type="ChEBI" id="CHEBI:456216"/>
    </reaction>
    <physiologicalReaction direction="left-to-right" evidence="14">
        <dbReference type="Rhea" id="RHEA:33504"/>
    </physiologicalReaction>
</comment>
<comment type="catalytic activity">
    <reaction evidence="15">
        <text>voriconazole(in) + ATP + H2O = voriconazole(out) + ADP + phosphate + H(+)</text>
        <dbReference type="Rhea" id="RHEA:61912"/>
        <dbReference type="ChEBI" id="CHEBI:10023"/>
        <dbReference type="ChEBI" id="CHEBI:15377"/>
        <dbReference type="ChEBI" id="CHEBI:15378"/>
        <dbReference type="ChEBI" id="CHEBI:30616"/>
        <dbReference type="ChEBI" id="CHEBI:43474"/>
        <dbReference type="ChEBI" id="CHEBI:456216"/>
    </reaction>
    <physiologicalReaction direction="left-to-right" evidence="15">
        <dbReference type="Rhea" id="RHEA:61913"/>
    </physiologicalReaction>
</comment>
<comment type="subcellular location">
    <subcellularLocation>
        <location evidence="13">Cell membrane</location>
        <topology evidence="1">Multi-pass membrane protein</topology>
    </subcellularLocation>
</comment>
<comment type="induction">
    <text evidence="6 7 8 9 10 11">Expression is induced by voriconazole exposure in vitro and in mice (PubMed:21321135). Expression is increased in clinical azole-resistant isolates and by the presence of itraconazole (PubMed:12709346, PubMed:15504870). Expression is also up-regulated during biofilm growth (PubMed:21724936). Expression is repressed by iron in an SreA-dependent manner (PubMed:18721228). Expression is down-regulated by tetrandrine and posaconazole in a synergistic manner (PubMed:28080217).</text>
</comment>
<comment type="similarity">
    <text evidence="13">Belongs to the ABC transporter superfamily. ABCB family. Multidrug resistance exporter (TC 3.A.1.201) subfamily.</text>
</comment>
<keyword id="KW-0067">ATP-binding</keyword>
<keyword id="KW-1003">Cell membrane</keyword>
<keyword id="KW-0325">Glycoprotein</keyword>
<keyword id="KW-0472">Membrane</keyword>
<keyword id="KW-0547">Nucleotide-binding</keyword>
<keyword id="KW-1185">Reference proteome</keyword>
<keyword id="KW-0677">Repeat</keyword>
<keyword id="KW-0812">Transmembrane</keyword>
<keyword id="KW-1133">Transmembrane helix</keyword>
<keyword id="KW-0813">Transport</keyword>
<name>MDR4_ASPFU</name>
<feature type="chain" id="PRO_0000445104" description="ABC multidrug transporter mdr4">
    <location>
        <begin position="1"/>
        <end position="1330"/>
    </location>
</feature>
<feature type="transmembrane region" description="Helical" evidence="1 3">
    <location>
        <begin position="90"/>
        <end position="110"/>
    </location>
</feature>
<feature type="transmembrane region" description="Helical" evidence="1 3">
    <location>
        <begin position="144"/>
        <end position="164"/>
    </location>
</feature>
<feature type="transmembrane region" description="Helical" evidence="1 3">
    <location>
        <begin position="218"/>
        <end position="238"/>
    </location>
</feature>
<feature type="transmembrane region" description="Helical" evidence="1 3">
    <location>
        <begin position="243"/>
        <end position="263"/>
    </location>
</feature>
<feature type="transmembrane region" description="Helical" evidence="1 3">
    <location>
        <begin position="324"/>
        <end position="344"/>
    </location>
</feature>
<feature type="transmembrane region" description="Helical" evidence="1 3">
    <location>
        <begin position="370"/>
        <end position="390"/>
    </location>
</feature>
<feature type="transmembrane region" description="Helical" evidence="1 3">
    <location>
        <begin position="761"/>
        <end position="781"/>
    </location>
</feature>
<feature type="transmembrane region" description="Helical" evidence="1 3">
    <location>
        <begin position="806"/>
        <end position="826"/>
    </location>
</feature>
<feature type="transmembrane region" description="Helical" evidence="1 3">
    <location>
        <begin position="871"/>
        <end position="893"/>
    </location>
</feature>
<feature type="transmembrane region" description="Helical" evidence="1 3">
    <location>
        <begin position="903"/>
        <end position="923"/>
    </location>
</feature>
<feature type="transmembrane region" description="Helical" evidence="1 3">
    <location>
        <begin position="989"/>
        <end position="1009"/>
    </location>
</feature>
<feature type="transmembrane region" description="Helical" evidence="1 3">
    <location>
        <begin position="1023"/>
        <end position="1043"/>
    </location>
</feature>
<feature type="domain" description="ABC transmembrane type-1 1" evidence="3">
    <location>
        <begin position="94"/>
        <end position="392"/>
    </location>
</feature>
<feature type="domain" description="ABC transporter 1" evidence="2">
    <location>
        <begin position="428"/>
        <end position="666"/>
    </location>
</feature>
<feature type="domain" description="ABC transmembrane type-1 2" evidence="3">
    <location>
        <begin position="761"/>
        <end position="1049"/>
    </location>
</feature>
<feature type="domain" description="ABC transporter 2" evidence="2">
    <location>
        <begin position="1086"/>
        <end position="1325"/>
    </location>
</feature>
<feature type="region of interest" description="Disordered" evidence="5">
    <location>
        <begin position="717"/>
        <end position="736"/>
    </location>
</feature>
<feature type="compositionally biased region" description="Basic and acidic residues" evidence="5">
    <location>
        <begin position="722"/>
        <end position="733"/>
    </location>
</feature>
<feature type="binding site" evidence="2">
    <location>
        <begin position="463"/>
        <end position="470"/>
    </location>
    <ligand>
        <name>ATP</name>
        <dbReference type="ChEBI" id="CHEBI:30616"/>
    </ligand>
</feature>
<feature type="binding site" evidence="2">
    <location>
        <begin position="1121"/>
        <end position="1128"/>
    </location>
    <ligand>
        <name>ATP</name>
        <dbReference type="ChEBI" id="CHEBI:30616"/>
    </ligand>
</feature>
<feature type="glycosylation site" description="N-linked (GlcNAc...) asparagine" evidence="4">
    <location>
        <position position="3"/>
    </location>
</feature>
<feature type="glycosylation site" description="N-linked (GlcNAc...) asparagine" evidence="4">
    <location>
        <position position="707"/>
    </location>
</feature>
<organism>
    <name type="scientific">Aspergillus fumigatus (strain ATCC MYA-4609 / CBS 101355 / FGSC A1100 / Af293)</name>
    <name type="common">Neosartorya fumigata</name>
    <dbReference type="NCBI Taxonomy" id="330879"/>
    <lineage>
        <taxon>Eukaryota</taxon>
        <taxon>Fungi</taxon>
        <taxon>Dikarya</taxon>
        <taxon>Ascomycota</taxon>
        <taxon>Pezizomycotina</taxon>
        <taxon>Eurotiomycetes</taxon>
        <taxon>Eurotiomycetidae</taxon>
        <taxon>Eurotiales</taxon>
        <taxon>Aspergillaceae</taxon>
        <taxon>Aspergillus</taxon>
        <taxon>Aspergillus subgen. Fumigati</taxon>
    </lineage>
</organism>
<reference key="1">
    <citation type="journal article" date="2005" name="Nature">
        <title>Genomic sequence of the pathogenic and allergenic filamentous fungus Aspergillus fumigatus.</title>
        <authorList>
            <person name="Nierman W.C."/>
            <person name="Pain A."/>
            <person name="Anderson M.J."/>
            <person name="Wortman J.R."/>
            <person name="Kim H.S."/>
            <person name="Arroyo J."/>
            <person name="Berriman M."/>
            <person name="Abe K."/>
            <person name="Archer D.B."/>
            <person name="Bermejo C."/>
            <person name="Bennett J.W."/>
            <person name="Bowyer P."/>
            <person name="Chen D."/>
            <person name="Collins M."/>
            <person name="Coulsen R."/>
            <person name="Davies R."/>
            <person name="Dyer P.S."/>
            <person name="Farman M.L."/>
            <person name="Fedorova N."/>
            <person name="Fedorova N.D."/>
            <person name="Feldblyum T.V."/>
            <person name="Fischer R."/>
            <person name="Fosker N."/>
            <person name="Fraser A."/>
            <person name="Garcia J.L."/>
            <person name="Garcia M.J."/>
            <person name="Goble A."/>
            <person name="Goldman G.H."/>
            <person name="Gomi K."/>
            <person name="Griffith-Jones S."/>
            <person name="Gwilliam R."/>
            <person name="Haas B.J."/>
            <person name="Haas H."/>
            <person name="Harris D.E."/>
            <person name="Horiuchi H."/>
            <person name="Huang J."/>
            <person name="Humphray S."/>
            <person name="Jimenez J."/>
            <person name="Keller N."/>
            <person name="Khouri H."/>
            <person name="Kitamoto K."/>
            <person name="Kobayashi T."/>
            <person name="Konzack S."/>
            <person name="Kulkarni R."/>
            <person name="Kumagai T."/>
            <person name="Lafton A."/>
            <person name="Latge J.-P."/>
            <person name="Li W."/>
            <person name="Lord A."/>
            <person name="Lu C."/>
            <person name="Majoros W.H."/>
            <person name="May G.S."/>
            <person name="Miller B.L."/>
            <person name="Mohamoud Y."/>
            <person name="Molina M."/>
            <person name="Monod M."/>
            <person name="Mouyna I."/>
            <person name="Mulligan S."/>
            <person name="Murphy L.D."/>
            <person name="O'Neil S."/>
            <person name="Paulsen I."/>
            <person name="Penalva M.A."/>
            <person name="Pertea M."/>
            <person name="Price C."/>
            <person name="Pritchard B.L."/>
            <person name="Quail M.A."/>
            <person name="Rabbinowitsch E."/>
            <person name="Rawlins N."/>
            <person name="Rajandream M.A."/>
            <person name="Reichard U."/>
            <person name="Renauld H."/>
            <person name="Robson G.D."/>
            <person name="Rodriguez de Cordoba S."/>
            <person name="Rodriguez-Pena J.M."/>
            <person name="Ronning C.M."/>
            <person name="Rutter S."/>
            <person name="Salzberg S.L."/>
            <person name="Sanchez M."/>
            <person name="Sanchez-Ferrero J.C."/>
            <person name="Saunders D."/>
            <person name="Seeger K."/>
            <person name="Squares R."/>
            <person name="Squares S."/>
            <person name="Takeuchi M."/>
            <person name="Tekaia F."/>
            <person name="Turner G."/>
            <person name="Vazquez de Aldana C.R."/>
            <person name="Weidman J."/>
            <person name="White O."/>
            <person name="Woodward J.R."/>
            <person name="Yu J.-H."/>
            <person name="Fraser C.M."/>
            <person name="Galagan J.E."/>
            <person name="Asai K."/>
            <person name="Machida M."/>
            <person name="Hall N."/>
            <person name="Barrell B.G."/>
            <person name="Denning D.W."/>
        </authorList>
    </citation>
    <scope>NUCLEOTIDE SEQUENCE [LARGE SCALE GENOMIC DNA]</scope>
    <source>
        <strain>ATCC MYA-4609 / CBS 101355 / FGSC A1100 / Af293</strain>
    </source>
</reference>
<reference key="2">
    <citation type="journal article" date="2003" name="Antimicrob. Agents Chemother.">
        <title>Multiple resistance mechanisms among Aspergillus fumigatus mutants with high-level resistance to itraconazole.</title>
        <authorList>
            <person name="Nascimento A.M."/>
            <person name="Goldman G.H."/>
            <person name="Park S."/>
            <person name="Marras S.A."/>
            <person name="Delmas G."/>
            <person name="Oza U."/>
            <person name="Lolans K."/>
            <person name="Dudley M.N."/>
            <person name="Mann P.A."/>
            <person name="Perlin D.S."/>
        </authorList>
    </citation>
    <scope>INDUCTION</scope>
    <scope>FUNCTION</scope>
</reference>
<reference key="3">
    <citation type="journal article" date="2004" name="Antimicrob. Agents Chemother.">
        <title>In vitro evolution of itraconazole resistance in Aspergillus fumigatus involves multiple mechanisms of resistance.</title>
        <authorList>
            <person name="da Silva Ferreira M.E."/>
            <person name="Capellaro J.L."/>
            <person name="dos Reis Marques E."/>
            <person name="Malavazi I."/>
            <person name="Perlin D."/>
            <person name="Park S."/>
            <person name="Anderson J.B."/>
            <person name="Colombo A.L."/>
            <person name="Arthington-Skaggs B.A."/>
            <person name="Goldman M.H."/>
            <person name="Goldman G.H."/>
        </authorList>
    </citation>
    <scope>INDUCTION</scope>
</reference>
<reference key="4">
    <citation type="journal article" date="2008" name="Mol. Microbiol.">
        <title>SreA-mediated iron regulation in Aspergillus fumigatus.</title>
        <authorList>
            <person name="Schrettl M."/>
            <person name="Kim H.S."/>
            <person name="Eisendle M."/>
            <person name="Kragl C."/>
            <person name="Nierman W.C."/>
            <person name="Heinekamp T."/>
            <person name="Werner E.R."/>
            <person name="Jacobsen I."/>
            <person name="Illmer P."/>
            <person name="Yi H."/>
            <person name="Brakhage A.A."/>
            <person name="Haas H."/>
        </authorList>
    </citation>
    <scope>INDUCTION</scope>
</reference>
<reference key="5">
    <citation type="journal article" date="2011" name="Antimicrob. Agents Chemother.">
        <title>Azole resistance of Aspergillus fumigatus biofilms is partly associated with efflux pump activity.</title>
        <authorList>
            <person name="Rajendran R."/>
            <person name="Mowat E."/>
            <person name="McCulloch E."/>
            <person name="Lappin D.F."/>
            <person name="Jones B."/>
            <person name="Lang S."/>
            <person name="Majithiya J.B."/>
            <person name="Warn P."/>
            <person name="Williams C."/>
            <person name="Ramage G."/>
        </authorList>
    </citation>
    <scope>FUNCTION</scope>
    <scope>INDUCTION</scope>
</reference>
<reference key="6">
    <citation type="journal article" date="2012" name="Eukaryot. Cell">
        <title>Global transcriptome changes underlying colony growth in the opportunistic human pathogen Aspergillus fumigatus.</title>
        <authorList>
            <person name="Gibbons J.G."/>
            <person name="Beauvais A."/>
            <person name="Beau R."/>
            <person name="McGary K.L."/>
            <person name="Latge J.P."/>
            <person name="Rokas A."/>
        </authorList>
    </citation>
    <scope>INDUCTION</scope>
</reference>
<reference key="7">
    <citation type="journal article" date="2017" name="Microb. Drug Resist.">
        <title>Synergistic effects of tetrandrine with posaconazole against Aspergillus fumigatus.</title>
        <authorList>
            <person name="Li S.X."/>
            <person name="Song Y.J."/>
            <person name="Jiang L."/>
            <person name="Zhao Y.J."/>
            <person name="Guo H."/>
            <person name="Li D.M."/>
            <person name="Zhu K.J."/>
            <person name="Zhang H."/>
        </authorList>
    </citation>
    <scope>INDUCTION</scope>
</reference>
<protein>
    <recommendedName>
        <fullName evidence="12">ABC multidrug transporter mdr4</fullName>
    </recommendedName>
</protein>
<evidence type="ECO:0000255" key="1"/>
<evidence type="ECO:0000255" key="2">
    <source>
        <dbReference type="PROSITE-ProRule" id="PRU00434"/>
    </source>
</evidence>
<evidence type="ECO:0000255" key="3">
    <source>
        <dbReference type="PROSITE-ProRule" id="PRU00441"/>
    </source>
</evidence>
<evidence type="ECO:0000255" key="4">
    <source>
        <dbReference type="PROSITE-ProRule" id="PRU00498"/>
    </source>
</evidence>
<evidence type="ECO:0000256" key="5">
    <source>
        <dbReference type="SAM" id="MobiDB-lite"/>
    </source>
</evidence>
<evidence type="ECO:0000269" key="6">
    <source>
    </source>
</evidence>
<evidence type="ECO:0000269" key="7">
    <source>
    </source>
</evidence>
<evidence type="ECO:0000269" key="8">
    <source>
    </source>
</evidence>
<evidence type="ECO:0000269" key="9">
    <source>
    </source>
</evidence>
<evidence type="ECO:0000269" key="10">
    <source>
    </source>
</evidence>
<evidence type="ECO:0000269" key="11">
    <source>
    </source>
</evidence>
<evidence type="ECO:0000303" key="12">
    <source>
    </source>
</evidence>
<evidence type="ECO:0000305" key="13"/>
<evidence type="ECO:0000305" key="14">
    <source>
    </source>
</evidence>
<evidence type="ECO:0000305" key="15">
    <source>
    </source>
</evidence>
<sequence>MQNTTVHGLYFCHPTSIDGNPELLAVSRRSLSRGDHVTFTASQCRPKRLQCCQWHSCTISSTHIPTKDDLGKSFAYLRLLFSLDYTIADVLLIIGGLLFAICAGIPFPLLGIVFGDLINDLNTVTCSSSDRATADLSSAVRAKVLYVIYITIANFCFIYAHSTCWCLVSERLARRYRRRYFESIIKQEAKFIESLPSGDVVSRLVSDIELVQSGTSEKVGLVISTLSYFVAAYVVAFIKVPKIAGMLVSVVPCFFLMALGGGHYIKKFAGRLAEKVNAATSIASSSLSHLTLVHAFNANDRLEKRFAGYLLQSRKDAVRKATTHAAQLGCLYFIAYSANALAFWEGSQMISKSVADGNSGTSVGAVYTVIFVLIDASFILSQVAPFIHVFASAAGASERLLQVINRPSAIDGTSDSGDKTAAFGEEDIRFRDVHFKYPSRPDVPVLQGVTFNIPPKKHTAIVGPSGGGKSTVVALLERFYDPDSGDVLIGDKNFRDINVRYLRGNIGYVQQEPSLLDRTILENIAYGLVCVTEIVDLVKEAAANANALGFIEALPYGFATNVGTAGNQLSGGQKQRIALARALVREPCLLILDEATAALDSTSEQLIQAALNRVSERVTTVSIAHRLATAKNAHKIVVVQSGRVTEEGSHTDLVSRGGVYAEMVRLQNLGKLSLDDRVISGDMISALNATPETRQLLDEKQAFVDGNRSDITEDTVVADTPSDSRDGSEEEARKKRKRTRSAGFVTRYTFALIRPNLHWVLLGLAMSVIIGGSYSAEAIVFGHTVGSLSPCRSAEAISRDGNLYGLLFFILALVEFGANVVGGCAFGWAADKVLYRIRVLSLRSLLGQTVKWHESEDRTPGTLLTYITGDASALGGITGTTIGLLLATAVNLIGGLVISFSIAWKITIVLFPTIPVLLVSGMMKLRVQKQLAERHQKAFAKATAVTIEAVDNIRAVSAFSLEKQSYQVYGRALRGPYRATIKATFHGNAWLALAFSISNLVYALAYWWGSKQIAEGRYSQTQFFIVMPALLFSTQSCGQMFALAPDISKAGVASSNIVELLTTRSAEDEVTPGSSHSFQPSSSMGAQLRDVHFTYPHRPERPVLKGLNIDIKPGQFCALVGPSGSGKSTTFAMLERFYRPNAGAVVIDGVDVTRQVGTEFRDDIALVPQQNILFEGTVAFNVALGACPGHEPTQEEIEEACRMANIHDVIMTLPQGYQTMCSHDGKQFSGGQRQRLSIARALVRKPRLLLLDESTSALDVESEKRIQEALATLAGRTTVVAIAHRLNTIHRADQIFLIEDGRCIEQGTHQQLIQRSETYRTSVIHQSLET</sequence>